<protein>
    <recommendedName>
        <fullName evidence="1">Hexuronate transporter</fullName>
    </recommendedName>
    <alternativeName>
        <fullName evidence="1">Aldohexuronate transport system</fullName>
    </alternativeName>
</protein>
<evidence type="ECO:0000250" key="1">
    <source>
        <dbReference type="UniProtKB" id="P0AA78"/>
    </source>
</evidence>
<evidence type="ECO:0000255" key="2"/>
<evidence type="ECO:0000305" key="3"/>
<proteinExistence type="inferred from homology"/>
<accession>P0AA79</accession>
<accession>P42609</accession>
<feature type="signal peptide" evidence="2">
    <location>
        <begin position="1"/>
        <end position="31"/>
    </location>
</feature>
<feature type="chain" id="PRO_0000121380" description="Hexuronate transporter">
    <location>
        <begin position="32"/>
        <end position="432"/>
    </location>
</feature>
<feature type="topological domain" description="Periplasmic" evidence="3">
    <location>
        <begin position="33"/>
        <end position="48"/>
    </location>
</feature>
<feature type="transmembrane region" description="Helical" evidence="2">
    <location>
        <begin position="49"/>
        <end position="69"/>
    </location>
</feature>
<feature type="topological domain" description="Cytoplasmic" evidence="3">
    <location>
        <begin position="70"/>
        <end position="75"/>
    </location>
</feature>
<feature type="transmembrane region" description="Helical" evidence="2">
    <location>
        <begin position="76"/>
        <end position="96"/>
    </location>
</feature>
<feature type="topological domain" description="Periplasmic" evidence="3">
    <location>
        <begin position="97"/>
        <end position="99"/>
    </location>
</feature>
<feature type="transmembrane region" description="Helical" evidence="2">
    <location>
        <begin position="100"/>
        <end position="120"/>
    </location>
</feature>
<feature type="topological domain" description="Cytoplasmic" evidence="3">
    <location>
        <begin position="121"/>
        <end position="138"/>
    </location>
</feature>
<feature type="transmembrane region" description="Helical" evidence="2">
    <location>
        <begin position="139"/>
        <end position="159"/>
    </location>
</feature>
<feature type="topological domain" description="Periplasmic" evidence="3">
    <location>
        <begin position="160"/>
        <end position="164"/>
    </location>
</feature>
<feature type="transmembrane region" description="Helical" evidence="2">
    <location>
        <begin position="165"/>
        <end position="185"/>
    </location>
</feature>
<feature type="topological domain" description="Cytoplasmic" evidence="3">
    <location>
        <begin position="186"/>
        <end position="236"/>
    </location>
</feature>
<feature type="transmembrane region" description="Helical" evidence="2">
    <location>
        <begin position="237"/>
        <end position="257"/>
    </location>
</feature>
<feature type="topological domain" description="Periplasmic" evidence="3">
    <location>
        <begin position="258"/>
        <end position="264"/>
    </location>
</feature>
<feature type="transmembrane region" description="Helical" evidence="2">
    <location>
        <begin position="265"/>
        <end position="285"/>
    </location>
</feature>
<feature type="topological domain" description="Cytoplasmic" evidence="3">
    <location>
        <begin position="286"/>
        <end position="293"/>
    </location>
</feature>
<feature type="transmembrane region" description="Helical" evidence="2">
    <location>
        <begin position="294"/>
        <end position="314"/>
    </location>
</feature>
<feature type="topological domain" description="Periplasmic" evidence="3">
    <location>
        <begin position="315"/>
        <end position="317"/>
    </location>
</feature>
<feature type="transmembrane region" description="Helical" evidence="2">
    <location>
        <begin position="318"/>
        <end position="338"/>
    </location>
</feature>
<feature type="topological domain" description="Cytoplasmic" evidence="3">
    <location>
        <begin position="339"/>
        <end position="369"/>
    </location>
</feature>
<feature type="transmembrane region" description="Helical" evidence="2">
    <location>
        <begin position="370"/>
        <end position="390"/>
    </location>
</feature>
<feature type="topological domain" description="Periplasmic" evidence="3">
    <location>
        <position position="391"/>
    </location>
</feature>
<feature type="transmembrane region" description="Helical" evidence="2">
    <location>
        <begin position="392"/>
        <end position="412"/>
    </location>
</feature>
<feature type="topological domain" description="Cytoplasmic" evidence="1">
    <location>
        <begin position="413"/>
        <end position="432"/>
    </location>
</feature>
<name>EXUT_ECO57</name>
<comment type="function">
    <text evidence="1">Transport of aldohexuronates such as D-glucuronate and D-galacturonate.</text>
</comment>
<comment type="catalytic activity">
    <reaction evidence="1">
        <text>aldehydo-D-glucuronate(in) + H(+)(in) = aldehydo-D-glucuronate(out) + H(+)(out)</text>
        <dbReference type="Rhea" id="RHEA:28955"/>
        <dbReference type="ChEBI" id="CHEBI:15378"/>
        <dbReference type="ChEBI" id="CHEBI:142686"/>
    </reaction>
</comment>
<comment type="catalytic activity">
    <reaction evidence="1">
        <text>aldehydo-D-galacturonate(out) + H(+)(out) = aldehydo-D-galacturonate(in) + H(+)(in)</text>
        <dbReference type="Rhea" id="RHEA:29295"/>
        <dbReference type="ChEBI" id="CHEBI:12952"/>
        <dbReference type="ChEBI" id="CHEBI:15378"/>
    </reaction>
</comment>
<comment type="subcellular location">
    <subcellularLocation>
        <location evidence="1">Cell inner membrane</location>
        <topology evidence="2">Multi-pass membrane protein</topology>
    </subcellularLocation>
</comment>
<comment type="similarity">
    <text evidence="3">Belongs to the major facilitator superfamily. Phthalate permease family.</text>
</comment>
<comment type="sequence caution" evidence="3">
    <conflict type="erroneous initiation">
        <sequence resource="EMBL-CDS" id="AAG58226"/>
    </conflict>
    <text>Extended N-terminus.</text>
</comment>
<sequence>MRKIKGLRWYMIALVTLGTVLGYLTRNTVAAAAPTLMEELNISTQQYSYIIAAYSAAYTVMQPVAGYVLDVLGTKIGYAMFAVLWAVFCGATALAGSWGGLAVARGAVGAAEAAMIPAGLKASSEWFPAKERSIAVGYFNVGSSIGAMIAPPLVVWAIVMHSWQMAFIISGALSFIWAMAWLIFYKHPRDQKHLTDEERDYIINGQEAQHQVSTAKKMSVGQILRNRQFWGIALPRFLAEPAWGTFNAWIPLFMFKVYGFNLKEIAMFAWMPMLFADLGCILGGYLPPLFQRWFGVNLIVSRKMVVTLGAVLMIGPGMIGLFTNPYVAIMLLCIGGFAHQALSGALITLSSDVFGRNEVATANGLTGMSAWLASTLFALVVGALADTIGFSPLFAVLAVFDLLGALVIWTVLQNKPAIEVAQETHNDPAPQH</sequence>
<organism>
    <name type="scientific">Escherichia coli O157:H7</name>
    <dbReference type="NCBI Taxonomy" id="83334"/>
    <lineage>
        <taxon>Bacteria</taxon>
        <taxon>Pseudomonadati</taxon>
        <taxon>Pseudomonadota</taxon>
        <taxon>Gammaproteobacteria</taxon>
        <taxon>Enterobacterales</taxon>
        <taxon>Enterobacteriaceae</taxon>
        <taxon>Escherichia</taxon>
    </lineage>
</organism>
<keyword id="KW-0997">Cell inner membrane</keyword>
<keyword id="KW-1003">Cell membrane</keyword>
<keyword id="KW-0472">Membrane</keyword>
<keyword id="KW-1185">Reference proteome</keyword>
<keyword id="KW-0732">Signal</keyword>
<keyword id="KW-0812">Transmembrane</keyword>
<keyword id="KW-1133">Transmembrane helix</keyword>
<keyword id="KW-0813">Transport</keyword>
<dbReference type="EMBL" id="AE005174">
    <property type="protein sequence ID" value="AAG58226.1"/>
    <property type="status" value="ALT_INIT"/>
    <property type="molecule type" value="Genomic_DNA"/>
</dbReference>
<dbReference type="EMBL" id="BA000007">
    <property type="protein sequence ID" value="BAB37398.2"/>
    <property type="molecule type" value="Genomic_DNA"/>
</dbReference>
<dbReference type="PIR" id="F85970">
    <property type="entry name" value="F85970"/>
</dbReference>
<dbReference type="PIR" id="G91125">
    <property type="entry name" value="G91125"/>
</dbReference>
<dbReference type="RefSeq" id="NP_312002.1">
    <property type="nucleotide sequence ID" value="NC_002695.1"/>
</dbReference>
<dbReference type="RefSeq" id="WP_001226465.1">
    <property type="nucleotide sequence ID" value="NZ_VOAI01000009.1"/>
</dbReference>
<dbReference type="SMR" id="P0AA79"/>
<dbReference type="STRING" id="155864.Z4446"/>
<dbReference type="GeneID" id="916191"/>
<dbReference type="KEGG" id="ece:Z4446"/>
<dbReference type="KEGG" id="ecs:ECs_3975"/>
<dbReference type="PATRIC" id="fig|386585.9.peg.4149"/>
<dbReference type="eggNOG" id="COG2271">
    <property type="taxonomic scope" value="Bacteria"/>
</dbReference>
<dbReference type="HOGENOM" id="CLU_001265_5_1_6"/>
<dbReference type="Proteomes" id="UP000000558">
    <property type="component" value="Chromosome"/>
</dbReference>
<dbReference type="Proteomes" id="UP000002519">
    <property type="component" value="Chromosome"/>
</dbReference>
<dbReference type="GO" id="GO:0005886">
    <property type="term" value="C:plasma membrane"/>
    <property type="evidence" value="ECO:0007669"/>
    <property type="project" value="UniProtKB-SubCell"/>
</dbReference>
<dbReference type="GO" id="GO:0015134">
    <property type="term" value="F:hexuronate transmembrane transporter activity"/>
    <property type="evidence" value="ECO:0007669"/>
    <property type="project" value="TreeGrafter"/>
</dbReference>
<dbReference type="CDD" id="cd17319">
    <property type="entry name" value="MFS_ExuT_GudP_like"/>
    <property type="match status" value="1"/>
</dbReference>
<dbReference type="FunFam" id="1.20.1250.20:FF:000036">
    <property type="entry name" value="Hexuronate transporter"/>
    <property type="match status" value="1"/>
</dbReference>
<dbReference type="FunFam" id="1.20.1250.20:FF:000173">
    <property type="entry name" value="Hexuronate transporter"/>
    <property type="match status" value="1"/>
</dbReference>
<dbReference type="Gene3D" id="1.20.1250.20">
    <property type="entry name" value="MFS general substrate transporter like domains"/>
    <property type="match status" value="2"/>
</dbReference>
<dbReference type="InterPro" id="IPR011701">
    <property type="entry name" value="MFS"/>
</dbReference>
<dbReference type="InterPro" id="IPR020846">
    <property type="entry name" value="MFS_dom"/>
</dbReference>
<dbReference type="InterPro" id="IPR050382">
    <property type="entry name" value="MFS_Na/Anion_cotransporter"/>
</dbReference>
<dbReference type="InterPro" id="IPR036259">
    <property type="entry name" value="MFS_trans_sf"/>
</dbReference>
<dbReference type="NCBIfam" id="TIGR00893">
    <property type="entry name" value="2A0114"/>
    <property type="match status" value="1"/>
</dbReference>
<dbReference type="PANTHER" id="PTHR11662:SF285">
    <property type="entry name" value="HEXURONATE TRANSPORTER"/>
    <property type="match status" value="1"/>
</dbReference>
<dbReference type="PANTHER" id="PTHR11662">
    <property type="entry name" value="SOLUTE CARRIER FAMILY 17"/>
    <property type="match status" value="1"/>
</dbReference>
<dbReference type="Pfam" id="PF07690">
    <property type="entry name" value="MFS_1"/>
    <property type="match status" value="2"/>
</dbReference>
<dbReference type="SUPFAM" id="SSF103473">
    <property type="entry name" value="MFS general substrate transporter"/>
    <property type="match status" value="1"/>
</dbReference>
<dbReference type="PROSITE" id="PS50850">
    <property type="entry name" value="MFS"/>
    <property type="match status" value="1"/>
</dbReference>
<reference key="1">
    <citation type="journal article" date="2001" name="Nature">
        <title>Genome sequence of enterohaemorrhagic Escherichia coli O157:H7.</title>
        <authorList>
            <person name="Perna N.T."/>
            <person name="Plunkett G. III"/>
            <person name="Burland V."/>
            <person name="Mau B."/>
            <person name="Glasner J.D."/>
            <person name="Rose D.J."/>
            <person name="Mayhew G.F."/>
            <person name="Evans P.S."/>
            <person name="Gregor J."/>
            <person name="Kirkpatrick H.A."/>
            <person name="Posfai G."/>
            <person name="Hackett J."/>
            <person name="Klink S."/>
            <person name="Boutin A."/>
            <person name="Shao Y."/>
            <person name="Miller L."/>
            <person name="Grotbeck E.J."/>
            <person name="Davis N.W."/>
            <person name="Lim A."/>
            <person name="Dimalanta E.T."/>
            <person name="Potamousis K."/>
            <person name="Apodaca J."/>
            <person name="Anantharaman T.S."/>
            <person name="Lin J."/>
            <person name="Yen G."/>
            <person name="Schwartz D.C."/>
            <person name="Welch R.A."/>
            <person name="Blattner F.R."/>
        </authorList>
    </citation>
    <scope>NUCLEOTIDE SEQUENCE [LARGE SCALE GENOMIC DNA]</scope>
    <source>
        <strain>O157:H7 / EDL933 / ATCC 700927 / EHEC</strain>
    </source>
</reference>
<reference key="2">
    <citation type="journal article" date="2001" name="DNA Res.">
        <title>Complete genome sequence of enterohemorrhagic Escherichia coli O157:H7 and genomic comparison with a laboratory strain K-12.</title>
        <authorList>
            <person name="Hayashi T."/>
            <person name="Makino K."/>
            <person name="Ohnishi M."/>
            <person name="Kurokawa K."/>
            <person name="Ishii K."/>
            <person name="Yokoyama K."/>
            <person name="Han C.-G."/>
            <person name="Ohtsubo E."/>
            <person name="Nakayama K."/>
            <person name="Murata T."/>
            <person name="Tanaka M."/>
            <person name="Tobe T."/>
            <person name="Iida T."/>
            <person name="Takami H."/>
            <person name="Honda T."/>
            <person name="Sasakawa C."/>
            <person name="Ogasawara N."/>
            <person name="Yasunaga T."/>
            <person name="Kuhara S."/>
            <person name="Shiba T."/>
            <person name="Hattori M."/>
            <person name="Shinagawa H."/>
        </authorList>
    </citation>
    <scope>NUCLEOTIDE SEQUENCE [LARGE SCALE GENOMIC DNA]</scope>
    <source>
        <strain>O157:H7 / Sakai / RIMD 0509952 / EHEC</strain>
    </source>
</reference>
<gene>
    <name type="primary">exuT</name>
    <name type="ordered locus">Z4446</name>
    <name type="ordered locus">ECs3975</name>
</gene>